<protein>
    <recommendedName>
        <fullName evidence="1">tRNA-2-methylthio-N(6)-dimethylallyladenosine synthase</fullName>
        <ecNumber evidence="1">2.8.4.3</ecNumber>
    </recommendedName>
    <alternativeName>
        <fullName evidence="1">(Dimethylallyl)adenosine tRNA methylthiotransferase MiaB</fullName>
    </alternativeName>
    <alternativeName>
        <fullName evidence="1">tRNA-i(6)A37 methylthiotransferase</fullName>
    </alternativeName>
</protein>
<keyword id="KW-0004">4Fe-4S</keyword>
<keyword id="KW-0963">Cytoplasm</keyword>
<keyword id="KW-0408">Iron</keyword>
<keyword id="KW-0411">Iron-sulfur</keyword>
<keyword id="KW-0479">Metal-binding</keyword>
<keyword id="KW-0949">S-adenosyl-L-methionine</keyword>
<keyword id="KW-0808">Transferase</keyword>
<keyword id="KW-0819">tRNA processing</keyword>
<accession>B0TR38</accession>
<dbReference type="EC" id="2.8.4.3" evidence="1"/>
<dbReference type="EMBL" id="CP000931">
    <property type="protein sequence ID" value="ABZ77769.1"/>
    <property type="molecule type" value="Genomic_DNA"/>
</dbReference>
<dbReference type="RefSeq" id="WP_012278292.1">
    <property type="nucleotide sequence ID" value="NC_010334.1"/>
</dbReference>
<dbReference type="SMR" id="B0TR38"/>
<dbReference type="STRING" id="458817.Shal_3222"/>
<dbReference type="KEGG" id="shl:Shal_3222"/>
<dbReference type="eggNOG" id="COG0621">
    <property type="taxonomic scope" value="Bacteria"/>
</dbReference>
<dbReference type="HOGENOM" id="CLU_018697_2_0_6"/>
<dbReference type="OrthoDB" id="9805215at2"/>
<dbReference type="Proteomes" id="UP000001317">
    <property type="component" value="Chromosome"/>
</dbReference>
<dbReference type="GO" id="GO:0005829">
    <property type="term" value="C:cytosol"/>
    <property type="evidence" value="ECO:0007669"/>
    <property type="project" value="TreeGrafter"/>
</dbReference>
<dbReference type="GO" id="GO:0051539">
    <property type="term" value="F:4 iron, 4 sulfur cluster binding"/>
    <property type="evidence" value="ECO:0007669"/>
    <property type="project" value="UniProtKB-UniRule"/>
</dbReference>
<dbReference type="GO" id="GO:0046872">
    <property type="term" value="F:metal ion binding"/>
    <property type="evidence" value="ECO:0007669"/>
    <property type="project" value="UniProtKB-KW"/>
</dbReference>
<dbReference type="GO" id="GO:0035597">
    <property type="term" value="F:N6-isopentenyladenosine methylthiotransferase activity"/>
    <property type="evidence" value="ECO:0007669"/>
    <property type="project" value="TreeGrafter"/>
</dbReference>
<dbReference type="CDD" id="cd01335">
    <property type="entry name" value="Radical_SAM"/>
    <property type="match status" value="1"/>
</dbReference>
<dbReference type="FunFam" id="3.40.50.12160:FF:000001">
    <property type="entry name" value="tRNA-2-methylthio-N(6)-dimethylallyladenosine synthase"/>
    <property type="match status" value="1"/>
</dbReference>
<dbReference type="FunFam" id="3.80.30.20:FF:000001">
    <property type="entry name" value="tRNA-2-methylthio-N(6)-dimethylallyladenosine synthase 2"/>
    <property type="match status" value="1"/>
</dbReference>
<dbReference type="Gene3D" id="3.40.50.12160">
    <property type="entry name" value="Methylthiotransferase, N-terminal domain"/>
    <property type="match status" value="1"/>
</dbReference>
<dbReference type="Gene3D" id="3.80.30.20">
    <property type="entry name" value="tm_1862 like domain"/>
    <property type="match status" value="1"/>
</dbReference>
<dbReference type="HAMAP" id="MF_01864">
    <property type="entry name" value="tRNA_metthiotr_MiaB"/>
    <property type="match status" value="1"/>
</dbReference>
<dbReference type="InterPro" id="IPR006638">
    <property type="entry name" value="Elp3/MiaA/NifB-like_rSAM"/>
</dbReference>
<dbReference type="InterPro" id="IPR005839">
    <property type="entry name" value="Methylthiotransferase"/>
</dbReference>
<dbReference type="InterPro" id="IPR020612">
    <property type="entry name" value="Methylthiotransferase_CS"/>
</dbReference>
<dbReference type="InterPro" id="IPR013848">
    <property type="entry name" value="Methylthiotransferase_N"/>
</dbReference>
<dbReference type="InterPro" id="IPR038135">
    <property type="entry name" value="Methylthiotransferase_N_sf"/>
</dbReference>
<dbReference type="InterPro" id="IPR006463">
    <property type="entry name" value="MiaB_methiolase"/>
</dbReference>
<dbReference type="InterPro" id="IPR007197">
    <property type="entry name" value="rSAM"/>
</dbReference>
<dbReference type="InterPro" id="IPR023404">
    <property type="entry name" value="rSAM_horseshoe"/>
</dbReference>
<dbReference type="InterPro" id="IPR002792">
    <property type="entry name" value="TRAM_dom"/>
</dbReference>
<dbReference type="NCBIfam" id="TIGR01574">
    <property type="entry name" value="miaB-methiolase"/>
    <property type="match status" value="1"/>
</dbReference>
<dbReference type="NCBIfam" id="TIGR00089">
    <property type="entry name" value="MiaB/RimO family radical SAM methylthiotransferase"/>
    <property type="match status" value="1"/>
</dbReference>
<dbReference type="PANTHER" id="PTHR43020">
    <property type="entry name" value="CDK5 REGULATORY SUBUNIT-ASSOCIATED PROTEIN 1"/>
    <property type="match status" value="1"/>
</dbReference>
<dbReference type="PANTHER" id="PTHR43020:SF2">
    <property type="entry name" value="MITOCHONDRIAL TRNA METHYLTHIOTRANSFERASE CDK5RAP1"/>
    <property type="match status" value="1"/>
</dbReference>
<dbReference type="Pfam" id="PF04055">
    <property type="entry name" value="Radical_SAM"/>
    <property type="match status" value="1"/>
</dbReference>
<dbReference type="Pfam" id="PF01938">
    <property type="entry name" value="TRAM"/>
    <property type="match status" value="1"/>
</dbReference>
<dbReference type="Pfam" id="PF00919">
    <property type="entry name" value="UPF0004"/>
    <property type="match status" value="1"/>
</dbReference>
<dbReference type="SFLD" id="SFLDF00273">
    <property type="entry name" value="(dimethylallyl)adenosine_tRNA"/>
    <property type="match status" value="1"/>
</dbReference>
<dbReference type="SFLD" id="SFLDG01082">
    <property type="entry name" value="B12-binding_domain_containing"/>
    <property type="match status" value="1"/>
</dbReference>
<dbReference type="SFLD" id="SFLDS00029">
    <property type="entry name" value="Radical_SAM"/>
    <property type="match status" value="1"/>
</dbReference>
<dbReference type="SMART" id="SM00729">
    <property type="entry name" value="Elp3"/>
    <property type="match status" value="1"/>
</dbReference>
<dbReference type="SUPFAM" id="SSF102114">
    <property type="entry name" value="Radical SAM enzymes"/>
    <property type="match status" value="1"/>
</dbReference>
<dbReference type="PROSITE" id="PS51449">
    <property type="entry name" value="MTTASE_N"/>
    <property type="match status" value="1"/>
</dbReference>
<dbReference type="PROSITE" id="PS01278">
    <property type="entry name" value="MTTASE_RADICAL"/>
    <property type="match status" value="1"/>
</dbReference>
<dbReference type="PROSITE" id="PS51918">
    <property type="entry name" value="RADICAL_SAM"/>
    <property type="match status" value="1"/>
</dbReference>
<dbReference type="PROSITE" id="PS50926">
    <property type="entry name" value="TRAM"/>
    <property type="match status" value="1"/>
</dbReference>
<evidence type="ECO:0000255" key="1">
    <source>
        <dbReference type="HAMAP-Rule" id="MF_01864"/>
    </source>
</evidence>
<evidence type="ECO:0000255" key="2">
    <source>
        <dbReference type="PROSITE-ProRule" id="PRU01266"/>
    </source>
</evidence>
<comment type="function">
    <text evidence="1">Catalyzes the methylthiolation of N6-(dimethylallyl)adenosine (i(6)A), leading to the formation of 2-methylthio-N6-(dimethylallyl)adenosine (ms(2)i(6)A) at position 37 in tRNAs that read codons beginning with uridine.</text>
</comment>
<comment type="catalytic activity">
    <reaction evidence="1">
        <text>N(6)-dimethylallyladenosine(37) in tRNA + (sulfur carrier)-SH + AH2 + 2 S-adenosyl-L-methionine = 2-methylsulfanyl-N(6)-dimethylallyladenosine(37) in tRNA + (sulfur carrier)-H + 5'-deoxyadenosine + L-methionine + A + S-adenosyl-L-homocysteine + 2 H(+)</text>
        <dbReference type="Rhea" id="RHEA:37067"/>
        <dbReference type="Rhea" id="RHEA-COMP:10375"/>
        <dbReference type="Rhea" id="RHEA-COMP:10376"/>
        <dbReference type="Rhea" id="RHEA-COMP:14737"/>
        <dbReference type="Rhea" id="RHEA-COMP:14739"/>
        <dbReference type="ChEBI" id="CHEBI:13193"/>
        <dbReference type="ChEBI" id="CHEBI:15378"/>
        <dbReference type="ChEBI" id="CHEBI:17319"/>
        <dbReference type="ChEBI" id="CHEBI:17499"/>
        <dbReference type="ChEBI" id="CHEBI:29917"/>
        <dbReference type="ChEBI" id="CHEBI:57844"/>
        <dbReference type="ChEBI" id="CHEBI:57856"/>
        <dbReference type="ChEBI" id="CHEBI:59789"/>
        <dbReference type="ChEBI" id="CHEBI:64428"/>
        <dbReference type="ChEBI" id="CHEBI:74415"/>
        <dbReference type="ChEBI" id="CHEBI:74417"/>
        <dbReference type="EC" id="2.8.4.3"/>
    </reaction>
</comment>
<comment type="cofactor">
    <cofactor evidence="1">
        <name>[4Fe-4S] cluster</name>
        <dbReference type="ChEBI" id="CHEBI:49883"/>
    </cofactor>
    <text evidence="1">Binds 2 [4Fe-4S] clusters. One cluster is coordinated with 3 cysteines and an exchangeable S-adenosyl-L-methionine.</text>
</comment>
<comment type="subunit">
    <text evidence="1">Monomer.</text>
</comment>
<comment type="subcellular location">
    <subcellularLocation>
        <location evidence="1">Cytoplasm</location>
    </subcellularLocation>
</comment>
<comment type="similarity">
    <text evidence="1">Belongs to the methylthiotransferase family. MiaB subfamily.</text>
</comment>
<sequence>MSKKLHIKTWGCQMNEYDSSKMADLLDEYEGYTLTDNAEEADVLLLNTCSIREKAQEKVFHQLGRWKTLKDKKPELIIGVGGCVASQEGKAIKERAQCVDLIFGPQTLHRLPEMIDQIRAGKKAVIDVSFPEIEKFDRLPEPRADGPSAFVSIMEGCSKYCSFCVVPYTRGEEVSRPLDDIILEIAQLAEQGVREVNLLGQNVNAYRGATHDDEICTFAELLRYVAAIDGIDRLRFTTSHPIEFTQDIIDVYEDTPELVSFLHLPVQSGSDLILTQMKRGHMAIEYKSIIRRLRKARPDILISSDFIIGFPGESKQDFADTMKLIEDIQFDHSFSFIYSARPGTPAADLPDDVSLDEKKERLAILQDRITQQAMRYSRQMVGTVQRILVEGPSVKNPMELRGRTENSRVVNFEGMHKHIGKFVDVEIVDVYTNSLRGVFIRGEDEMDLRRDLRPSDITAKYKQTDDLGVSQFKPA</sequence>
<name>MIAB_SHEHH</name>
<organism>
    <name type="scientific">Shewanella halifaxensis (strain HAW-EB4)</name>
    <dbReference type="NCBI Taxonomy" id="458817"/>
    <lineage>
        <taxon>Bacteria</taxon>
        <taxon>Pseudomonadati</taxon>
        <taxon>Pseudomonadota</taxon>
        <taxon>Gammaproteobacteria</taxon>
        <taxon>Alteromonadales</taxon>
        <taxon>Shewanellaceae</taxon>
        <taxon>Shewanella</taxon>
    </lineage>
</organism>
<gene>
    <name evidence="1" type="primary">miaB</name>
    <name type="ordered locus">Shal_3222</name>
</gene>
<reference key="1">
    <citation type="submission" date="2008-01" db="EMBL/GenBank/DDBJ databases">
        <title>Complete sequence of Shewanella halifaxensis HAW-EB4.</title>
        <authorList>
            <consortium name="US DOE Joint Genome Institute"/>
            <person name="Copeland A."/>
            <person name="Lucas S."/>
            <person name="Lapidus A."/>
            <person name="Glavina del Rio T."/>
            <person name="Dalin E."/>
            <person name="Tice H."/>
            <person name="Bruce D."/>
            <person name="Goodwin L."/>
            <person name="Pitluck S."/>
            <person name="Sims D."/>
            <person name="Brettin T."/>
            <person name="Detter J.C."/>
            <person name="Han C."/>
            <person name="Kuske C.R."/>
            <person name="Schmutz J."/>
            <person name="Larimer F."/>
            <person name="Land M."/>
            <person name="Hauser L."/>
            <person name="Kyrpides N."/>
            <person name="Kim E."/>
            <person name="Zhao J.-S."/>
            <person name="Richardson P."/>
        </authorList>
    </citation>
    <scope>NUCLEOTIDE SEQUENCE [LARGE SCALE GENOMIC DNA]</scope>
    <source>
        <strain>HAW-EB4</strain>
    </source>
</reference>
<proteinExistence type="inferred from homology"/>
<feature type="chain" id="PRO_0000374539" description="tRNA-2-methylthio-N(6)-dimethylallyladenosine synthase">
    <location>
        <begin position="1"/>
        <end position="475"/>
    </location>
</feature>
<feature type="domain" description="MTTase N-terminal" evidence="1">
    <location>
        <begin position="3"/>
        <end position="120"/>
    </location>
</feature>
<feature type="domain" description="Radical SAM core" evidence="2">
    <location>
        <begin position="143"/>
        <end position="375"/>
    </location>
</feature>
<feature type="domain" description="TRAM" evidence="1">
    <location>
        <begin position="378"/>
        <end position="441"/>
    </location>
</feature>
<feature type="binding site" evidence="1">
    <location>
        <position position="12"/>
    </location>
    <ligand>
        <name>[4Fe-4S] cluster</name>
        <dbReference type="ChEBI" id="CHEBI:49883"/>
        <label>1</label>
    </ligand>
</feature>
<feature type="binding site" evidence="1">
    <location>
        <position position="49"/>
    </location>
    <ligand>
        <name>[4Fe-4S] cluster</name>
        <dbReference type="ChEBI" id="CHEBI:49883"/>
        <label>1</label>
    </ligand>
</feature>
<feature type="binding site" evidence="1">
    <location>
        <position position="83"/>
    </location>
    <ligand>
        <name>[4Fe-4S] cluster</name>
        <dbReference type="ChEBI" id="CHEBI:49883"/>
        <label>1</label>
    </ligand>
</feature>
<feature type="binding site" evidence="1">
    <location>
        <position position="157"/>
    </location>
    <ligand>
        <name>[4Fe-4S] cluster</name>
        <dbReference type="ChEBI" id="CHEBI:49883"/>
        <label>2</label>
        <note>4Fe-4S-S-AdoMet</note>
    </ligand>
</feature>
<feature type="binding site" evidence="1">
    <location>
        <position position="161"/>
    </location>
    <ligand>
        <name>[4Fe-4S] cluster</name>
        <dbReference type="ChEBI" id="CHEBI:49883"/>
        <label>2</label>
        <note>4Fe-4S-S-AdoMet</note>
    </ligand>
</feature>
<feature type="binding site" evidence="1">
    <location>
        <position position="164"/>
    </location>
    <ligand>
        <name>[4Fe-4S] cluster</name>
        <dbReference type="ChEBI" id="CHEBI:49883"/>
        <label>2</label>
        <note>4Fe-4S-S-AdoMet</note>
    </ligand>
</feature>